<keyword id="KW-0274">FAD</keyword>
<keyword id="KW-0285">Flavoprotein</keyword>
<keyword id="KW-0560">Oxidoreductase</keyword>
<keyword id="KW-0816">Tricarboxylic acid cycle</keyword>
<sequence length="493" mass="54324">MSNRQIKSDVILIGAGIMSATLGTILKELAPDWKITVFEKLEKAGEESSHELNNAGTGHAALCELNYTSEKKDGSIDIKKAINVNEQFQVSRQFWSYLVNNKLINNPQDFIMPLPHMSLVQGKENVEFLKKRHETMIQNPLFEGMEFSNDPETLKKWIPLIMENRPAGEDIAATKIDTGTDVNFGALTRMLIDHLKAKDVDVNYNHSVESLKQASDGSWEVRVHDLDGCKMEYHSAKFVFLGAGGGSLELLQKSGIPEGKHIGGFPISGLFLACNNPEVAEQHHAKVYGKAKVGAPPMSVPHLDTRYIDNKKSLLFGPFAGFSPKFLKTGSNMDLFASVKPHNITTLLAAGVKEMGLTKYLIQQLMLSKEQRMEELREFIPNAKSDDWDIIVAGQRVQVIKDTEAGGKGTLQFGTEVVSAADGSIAALLGASPGASTAVHVMLEVINKCFPQHIKEWEAKIKEMIPSYGLSLAENPELLKEINATTDEALRLK</sequence>
<name>MQO_LYSSC</name>
<reference key="1">
    <citation type="journal article" date="2008" name="J. Bacteriol.">
        <title>Complete genome sequence of the mosquitocidal bacterium Bacillus sphaericus C3-41 and comparison with those of closely related Bacillus species.</title>
        <authorList>
            <person name="Hu X."/>
            <person name="Fan W."/>
            <person name="Han B."/>
            <person name="Liu H."/>
            <person name="Zheng D."/>
            <person name="Li Q."/>
            <person name="Dong W."/>
            <person name="Yan J."/>
            <person name="Gao M."/>
            <person name="Berry C."/>
            <person name="Yuan Z."/>
        </authorList>
    </citation>
    <scope>NUCLEOTIDE SEQUENCE [LARGE SCALE GENOMIC DNA]</scope>
    <source>
        <strain>C3-41</strain>
    </source>
</reference>
<comment type="catalytic activity">
    <reaction evidence="1">
        <text>(S)-malate + a quinone = a quinol + oxaloacetate</text>
        <dbReference type="Rhea" id="RHEA:46012"/>
        <dbReference type="ChEBI" id="CHEBI:15589"/>
        <dbReference type="ChEBI" id="CHEBI:16452"/>
        <dbReference type="ChEBI" id="CHEBI:24646"/>
        <dbReference type="ChEBI" id="CHEBI:132124"/>
        <dbReference type="EC" id="1.1.5.4"/>
    </reaction>
</comment>
<comment type="cofactor">
    <cofactor evidence="1">
        <name>FAD</name>
        <dbReference type="ChEBI" id="CHEBI:57692"/>
    </cofactor>
</comment>
<comment type="pathway">
    <text evidence="1">Carbohydrate metabolism; tricarboxylic acid cycle; oxaloacetate from (S)-malate (quinone route): step 1/1.</text>
</comment>
<comment type="similarity">
    <text evidence="1">Belongs to the MQO family.</text>
</comment>
<proteinExistence type="inferred from homology"/>
<accession>B1HNU2</accession>
<organism>
    <name type="scientific">Lysinibacillus sphaericus (strain C3-41)</name>
    <dbReference type="NCBI Taxonomy" id="444177"/>
    <lineage>
        <taxon>Bacteria</taxon>
        <taxon>Bacillati</taxon>
        <taxon>Bacillota</taxon>
        <taxon>Bacilli</taxon>
        <taxon>Bacillales</taxon>
        <taxon>Bacillaceae</taxon>
        <taxon>Lysinibacillus</taxon>
    </lineage>
</organism>
<protein>
    <recommendedName>
        <fullName evidence="1">Probable malate:quinone oxidoreductase</fullName>
        <ecNumber evidence="1">1.1.5.4</ecNumber>
    </recommendedName>
    <alternativeName>
        <fullName evidence="1">MQO</fullName>
    </alternativeName>
    <alternativeName>
        <fullName evidence="1">Malate dehydrogenase [quinone]</fullName>
    </alternativeName>
</protein>
<evidence type="ECO:0000255" key="1">
    <source>
        <dbReference type="HAMAP-Rule" id="MF_00212"/>
    </source>
</evidence>
<gene>
    <name evidence="1" type="primary">mqo</name>
    <name type="ordered locus">Bsph_4711</name>
</gene>
<dbReference type="EC" id="1.1.5.4" evidence="1"/>
<dbReference type="EMBL" id="CP000817">
    <property type="protein sequence ID" value="ACA42155.1"/>
    <property type="molecule type" value="Genomic_DNA"/>
</dbReference>
<dbReference type="RefSeq" id="WP_012296155.1">
    <property type="nucleotide sequence ID" value="NC_010382.1"/>
</dbReference>
<dbReference type="SMR" id="B1HNU2"/>
<dbReference type="EnsemblBacteria" id="ACA42155">
    <property type="protein sequence ID" value="ACA42155"/>
    <property type="gene ID" value="Bsph_4711"/>
</dbReference>
<dbReference type="KEGG" id="lsp:Bsph_4711"/>
<dbReference type="HOGENOM" id="CLU_028151_0_0_9"/>
<dbReference type="UniPathway" id="UPA00223">
    <property type="reaction ID" value="UER01008"/>
</dbReference>
<dbReference type="Proteomes" id="UP000002164">
    <property type="component" value="Chromosome"/>
</dbReference>
<dbReference type="GO" id="GO:0047545">
    <property type="term" value="F:2-hydroxyglutarate dehydrogenase activity"/>
    <property type="evidence" value="ECO:0007669"/>
    <property type="project" value="TreeGrafter"/>
</dbReference>
<dbReference type="GO" id="GO:0008924">
    <property type="term" value="F:L-malate dehydrogenase (quinone) activity"/>
    <property type="evidence" value="ECO:0007669"/>
    <property type="project" value="UniProtKB-UniRule"/>
</dbReference>
<dbReference type="GO" id="GO:0006099">
    <property type="term" value="P:tricarboxylic acid cycle"/>
    <property type="evidence" value="ECO:0007669"/>
    <property type="project" value="UniProtKB-UniRule"/>
</dbReference>
<dbReference type="Gene3D" id="3.30.9.10">
    <property type="entry name" value="D-Amino Acid Oxidase, subunit A, domain 2"/>
    <property type="match status" value="1"/>
</dbReference>
<dbReference type="Gene3D" id="3.50.50.60">
    <property type="entry name" value="FAD/NAD(P)-binding domain"/>
    <property type="match status" value="1"/>
</dbReference>
<dbReference type="HAMAP" id="MF_00212">
    <property type="entry name" value="MQO"/>
    <property type="match status" value="1"/>
</dbReference>
<dbReference type="InterPro" id="IPR036188">
    <property type="entry name" value="FAD/NAD-bd_sf"/>
</dbReference>
<dbReference type="InterPro" id="IPR006231">
    <property type="entry name" value="MQO"/>
</dbReference>
<dbReference type="NCBIfam" id="TIGR01320">
    <property type="entry name" value="mal_quin_oxido"/>
    <property type="match status" value="1"/>
</dbReference>
<dbReference type="NCBIfam" id="NF003603">
    <property type="entry name" value="PRK05257.1-1"/>
    <property type="match status" value="1"/>
</dbReference>
<dbReference type="NCBIfam" id="NF003604">
    <property type="entry name" value="PRK05257.1-3"/>
    <property type="match status" value="1"/>
</dbReference>
<dbReference type="NCBIfam" id="NF003605">
    <property type="entry name" value="PRK05257.1-4"/>
    <property type="match status" value="1"/>
</dbReference>
<dbReference type="NCBIfam" id="NF003606">
    <property type="entry name" value="PRK05257.2-1"/>
    <property type="match status" value="1"/>
</dbReference>
<dbReference type="NCBIfam" id="NF003608">
    <property type="entry name" value="PRK05257.2-4"/>
    <property type="match status" value="1"/>
</dbReference>
<dbReference type="NCBIfam" id="NF003610">
    <property type="entry name" value="PRK05257.3-1"/>
    <property type="match status" value="1"/>
</dbReference>
<dbReference type="NCBIfam" id="NF003611">
    <property type="entry name" value="PRK05257.3-2"/>
    <property type="match status" value="1"/>
</dbReference>
<dbReference type="NCBIfam" id="NF009875">
    <property type="entry name" value="PRK13339.1"/>
    <property type="match status" value="1"/>
</dbReference>
<dbReference type="PANTHER" id="PTHR43104">
    <property type="entry name" value="L-2-HYDROXYGLUTARATE DEHYDROGENASE, MITOCHONDRIAL"/>
    <property type="match status" value="1"/>
</dbReference>
<dbReference type="PANTHER" id="PTHR43104:SF2">
    <property type="entry name" value="L-2-HYDROXYGLUTARATE DEHYDROGENASE, MITOCHONDRIAL"/>
    <property type="match status" value="1"/>
</dbReference>
<dbReference type="Pfam" id="PF06039">
    <property type="entry name" value="Mqo"/>
    <property type="match status" value="1"/>
</dbReference>
<dbReference type="SUPFAM" id="SSF51905">
    <property type="entry name" value="FAD/NAD(P)-binding domain"/>
    <property type="match status" value="1"/>
</dbReference>
<feature type="chain" id="PRO_1000099875" description="Probable malate:quinone oxidoreductase">
    <location>
        <begin position="1"/>
        <end position="493"/>
    </location>
</feature>